<name>RS17_PHEZH</name>
<comment type="function">
    <text evidence="1">One of the primary rRNA binding proteins, it binds specifically to the 5'-end of 16S ribosomal RNA.</text>
</comment>
<comment type="subunit">
    <text evidence="1">Part of the 30S ribosomal subunit.</text>
</comment>
<comment type="similarity">
    <text evidence="1">Belongs to the universal ribosomal protein uS17 family.</text>
</comment>
<feature type="chain" id="PRO_1000143282" description="Small ribosomal subunit protein uS17">
    <location>
        <begin position="1"/>
        <end position="82"/>
    </location>
</feature>
<reference key="1">
    <citation type="journal article" date="2008" name="BMC Genomics">
        <title>Complete genome of Phenylobacterium zucineum - a novel facultative intracellular bacterium isolated from human erythroleukemia cell line K562.</title>
        <authorList>
            <person name="Luo Y."/>
            <person name="Xu X."/>
            <person name="Ding Z."/>
            <person name="Liu Z."/>
            <person name="Zhang B."/>
            <person name="Yan Z."/>
            <person name="Sun J."/>
            <person name="Hu S."/>
            <person name="Hu X."/>
        </authorList>
    </citation>
    <scope>NUCLEOTIDE SEQUENCE [LARGE SCALE GENOMIC DNA]</scope>
    <source>
        <strain>HLK1</strain>
    </source>
</reference>
<proteinExistence type="inferred from homology"/>
<gene>
    <name evidence="1" type="primary">rpsQ</name>
    <name type="ordered locus">PHZ_c1239</name>
</gene>
<organism>
    <name type="scientific">Phenylobacterium zucineum (strain HLK1)</name>
    <dbReference type="NCBI Taxonomy" id="450851"/>
    <lineage>
        <taxon>Bacteria</taxon>
        <taxon>Pseudomonadati</taxon>
        <taxon>Pseudomonadota</taxon>
        <taxon>Alphaproteobacteria</taxon>
        <taxon>Caulobacterales</taxon>
        <taxon>Caulobacteraceae</taxon>
        <taxon>Phenylobacterium</taxon>
    </lineage>
</organism>
<sequence length="82" mass="9166">MPKRILEGVVVSDKGDKTVVVKVERTFLHPVLKKTVRRSKKYHAHDEANTYKVGEVARIIECAPKSKLKTWEVLPKGGAAQA</sequence>
<protein>
    <recommendedName>
        <fullName evidence="1">Small ribosomal subunit protein uS17</fullName>
    </recommendedName>
    <alternativeName>
        <fullName evidence="2">30S ribosomal protein S17</fullName>
    </alternativeName>
</protein>
<evidence type="ECO:0000255" key="1">
    <source>
        <dbReference type="HAMAP-Rule" id="MF_01345"/>
    </source>
</evidence>
<evidence type="ECO:0000305" key="2"/>
<accession>B4R8M6</accession>
<dbReference type="EMBL" id="CP000747">
    <property type="protein sequence ID" value="ACG77653.1"/>
    <property type="molecule type" value="Genomic_DNA"/>
</dbReference>
<dbReference type="RefSeq" id="WP_012521797.1">
    <property type="nucleotide sequence ID" value="NC_011144.1"/>
</dbReference>
<dbReference type="SMR" id="B4R8M6"/>
<dbReference type="STRING" id="450851.PHZ_c1239"/>
<dbReference type="KEGG" id="pzu:PHZ_c1239"/>
<dbReference type="eggNOG" id="COG0186">
    <property type="taxonomic scope" value="Bacteria"/>
</dbReference>
<dbReference type="HOGENOM" id="CLU_073626_1_1_5"/>
<dbReference type="OrthoDB" id="9811714at2"/>
<dbReference type="Proteomes" id="UP000001868">
    <property type="component" value="Chromosome"/>
</dbReference>
<dbReference type="GO" id="GO:0022627">
    <property type="term" value="C:cytosolic small ribosomal subunit"/>
    <property type="evidence" value="ECO:0007669"/>
    <property type="project" value="TreeGrafter"/>
</dbReference>
<dbReference type="GO" id="GO:0019843">
    <property type="term" value="F:rRNA binding"/>
    <property type="evidence" value="ECO:0007669"/>
    <property type="project" value="UniProtKB-UniRule"/>
</dbReference>
<dbReference type="GO" id="GO:0003735">
    <property type="term" value="F:structural constituent of ribosome"/>
    <property type="evidence" value="ECO:0007669"/>
    <property type="project" value="InterPro"/>
</dbReference>
<dbReference type="GO" id="GO:0006412">
    <property type="term" value="P:translation"/>
    <property type="evidence" value="ECO:0007669"/>
    <property type="project" value="UniProtKB-UniRule"/>
</dbReference>
<dbReference type="CDD" id="cd00364">
    <property type="entry name" value="Ribosomal_uS17"/>
    <property type="match status" value="1"/>
</dbReference>
<dbReference type="Gene3D" id="2.40.50.140">
    <property type="entry name" value="Nucleic acid-binding proteins"/>
    <property type="match status" value="1"/>
</dbReference>
<dbReference type="HAMAP" id="MF_01345_B">
    <property type="entry name" value="Ribosomal_uS17_B"/>
    <property type="match status" value="1"/>
</dbReference>
<dbReference type="InterPro" id="IPR012340">
    <property type="entry name" value="NA-bd_OB-fold"/>
</dbReference>
<dbReference type="InterPro" id="IPR000266">
    <property type="entry name" value="Ribosomal_uS17"/>
</dbReference>
<dbReference type="InterPro" id="IPR019984">
    <property type="entry name" value="Ribosomal_uS17_bact/chlr"/>
</dbReference>
<dbReference type="NCBIfam" id="NF004123">
    <property type="entry name" value="PRK05610.1"/>
    <property type="match status" value="1"/>
</dbReference>
<dbReference type="NCBIfam" id="TIGR03635">
    <property type="entry name" value="uS17_bact"/>
    <property type="match status" value="1"/>
</dbReference>
<dbReference type="PANTHER" id="PTHR10744">
    <property type="entry name" value="40S RIBOSOMAL PROTEIN S11 FAMILY MEMBER"/>
    <property type="match status" value="1"/>
</dbReference>
<dbReference type="PANTHER" id="PTHR10744:SF1">
    <property type="entry name" value="SMALL RIBOSOMAL SUBUNIT PROTEIN US17M"/>
    <property type="match status" value="1"/>
</dbReference>
<dbReference type="Pfam" id="PF00366">
    <property type="entry name" value="Ribosomal_S17"/>
    <property type="match status" value="1"/>
</dbReference>
<dbReference type="PRINTS" id="PR00973">
    <property type="entry name" value="RIBOSOMALS17"/>
</dbReference>
<dbReference type="SUPFAM" id="SSF50249">
    <property type="entry name" value="Nucleic acid-binding proteins"/>
    <property type="match status" value="1"/>
</dbReference>
<keyword id="KW-1185">Reference proteome</keyword>
<keyword id="KW-0687">Ribonucleoprotein</keyword>
<keyword id="KW-0689">Ribosomal protein</keyword>
<keyword id="KW-0694">RNA-binding</keyword>
<keyword id="KW-0699">rRNA-binding</keyword>